<protein>
    <recommendedName>
        <fullName>Uracil-DNA glycosylase</fullName>
        <shortName>UDG</shortName>
        <ecNumber>3.2.2.27</ecNumber>
    </recommendedName>
</protein>
<gene>
    <name type="primary">ung</name>
    <name type="ordered locus">MT3053</name>
</gene>
<reference key="1">
    <citation type="journal article" date="2002" name="J. Bacteriol.">
        <title>Whole-genome comparison of Mycobacterium tuberculosis clinical and laboratory strains.</title>
        <authorList>
            <person name="Fleischmann R.D."/>
            <person name="Alland D."/>
            <person name="Eisen J.A."/>
            <person name="Carpenter L."/>
            <person name="White O."/>
            <person name="Peterson J.D."/>
            <person name="DeBoy R.T."/>
            <person name="Dodson R.J."/>
            <person name="Gwinn M.L."/>
            <person name="Haft D.H."/>
            <person name="Hickey E.K."/>
            <person name="Kolonay J.F."/>
            <person name="Nelson W.C."/>
            <person name="Umayam L.A."/>
            <person name="Ermolaeva M.D."/>
            <person name="Salzberg S.L."/>
            <person name="Delcher A."/>
            <person name="Utterback T.R."/>
            <person name="Weidman J.F."/>
            <person name="Khouri H.M."/>
            <person name="Gill J."/>
            <person name="Mikula A."/>
            <person name="Bishai W."/>
            <person name="Jacobs W.R. Jr."/>
            <person name="Venter J.C."/>
            <person name="Fraser C.M."/>
        </authorList>
    </citation>
    <scope>NUCLEOTIDE SEQUENCE [LARGE SCALE GENOMIC DNA]</scope>
    <source>
        <strain>CDC 1551 / Oshkosh</strain>
    </source>
</reference>
<organism>
    <name type="scientific">Mycobacterium tuberculosis (strain CDC 1551 / Oshkosh)</name>
    <dbReference type="NCBI Taxonomy" id="83331"/>
    <lineage>
        <taxon>Bacteria</taxon>
        <taxon>Bacillati</taxon>
        <taxon>Actinomycetota</taxon>
        <taxon>Actinomycetes</taxon>
        <taxon>Mycobacteriales</taxon>
        <taxon>Mycobacteriaceae</taxon>
        <taxon>Mycobacterium</taxon>
        <taxon>Mycobacterium tuberculosis complex</taxon>
    </lineage>
</organism>
<dbReference type="EC" id="3.2.2.27"/>
<dbReference type="EMBL" id="AE000516">
    <property type="protein sequence ID" value="AAK47381.1"/>
    <property type="molecule type" value="Genomic_DNA"/>
</dbReference>
<dbReference type="PIR" id="E70672">
    <property type="entry name" value="E70672"/>
</dbReference>
<dbReference type="RefSeq" id="WP_003899565.1">
    <property type="nucleotide sequence ID" value="NZ_KK341227.1"/>
</dbReference>
<dbReference type="SMR" id="P9WFQ8"/>
<dbReference type="KEGG" id="mtc:MT3053"/>
<dbReference type="PATRIC" id="fig|83331.31.peg.3297"/>
<dbReference type="HOGENOM" id="CLU_032162_3_1_11"/>
<dbReference type="Proteomes" id="UP000001020">
    <property type="component" value="Chromosome"/>
</dbReference>
<dbReference type="GO" id="GO:0005737">
    <property type="term" value="C:cytoplasm"/>
    <property type="evidence" value="ECO:0007669"/>
    <property type="project" value="UniProtKB-SubCell"/>
</dbReference>
<dbReference type="GO" id="GO:0004844">
    <property type="term" value="F:uracil DNA N-glycosylase activity"/>
    <property type="evidence" value="ECO:0007669"/>
    <property type="project" value="UniProtKB-UniRule"/>
</dbReference>
<dbReference type="GO" id="GO:0097510">
    <property type="term" value="P:base-excision repair, AP site formation via deaminated base removal"/>
    <property type="evidence" value="ECO:0007669"/>
    <property type="project" value="TreeGrafter"/>
</dbReference>
<dbReference type="CDD" id="cd10027">
    <property type="entry name" value="UDG-F1-like"/>
    <property type="match status" value="1"/>
</dbReference>
<dbReference type="FunFam" id="3.40.470.10:FF:000006">
    <property type="entry name" value="Uracil-DNA glycosylase"/>
    <property type="match status" value="1"/>
</dbReference>
<dbReference type="Gene3D" id="3.40.470.10">
    <property type="entry name" value="Uracil-DNA glycosylase-like domain"/>
    <property type="match status" value="1"/>
</dbReference>
<dbReference type="HAMAP" id="MF_00148">
    <property type="entry name" value="UDG"/>
    <property type="match status" value="1"/>
</dbReference>
<dbReference type="InterPro" id="IPR002043">
    <property type="entry name" value="UDG_fam1"/>
</dbReference>
<dbReference type="InterPro" id="IPR018085">
    <property type="entry name" value="Ura-DNA_Glyclase_AS"/>
</dbReference>
<dbReference type="InterPro" id="IPR005122">
    <property type="entry name" value="Uracil-DNA_glycosylase-like"/>
</dbReference>
<dbReference type="InterPro" id="IPR036895">
    <property type="entry name" value="Uracil-DNA_glycosylase-like_sf"/>
</dbReference>
<dbReference type="NCBIfam" id="NF003588">
    <property type="entry name" value="PRK05254.1-1"/>
    <property type="match status" value="1"/>
</dbReference>
<dbReference type="NCBIfam" id="NF003592">
    <property type="entry name" value="PRK05254.1-5"/>
    <property type="match status" value="1"/>
</dbReference>
<dbReference type="NCBIfam" id="TIGR00628">
    <property type="entry name" value="ung"/>
    <property type="match status" value="1"/>
</dbReference>
<dbReference type="PANTHER" id="PTHR11264">
    <property type="entry name" value="URACIL-DNA GLYCOSYLASE"/>
    <property type="match status" value="1"/>
</dbReference>
<dbReference type="PANTHER" id="PTHR11264:SF0">
    <property type="entry name" value="URACIL-DNA GLYCOSYLASE"/>
    <property type="match status" value="1"/>
</dbReference>
<dbReference type="Pfam" id="PF03167">
    <property type="entry name" value="UDG"/>
    <property type="match status" value="1"/>
</dbReference>
<dbReference type="SMART" id="SM00986">
    <property type="entry name" value="UDG"/>
    <property type="match status" value="1"/>
</dbReference>
<dbReference type="SMART" id="SM00987">
    <property type="entry name" value="UreE_C"/>
    <property type="match status" value="1"/>
</dbReference>
<dbReference type="SUPFAM" id="SSF52141">
    <property type="entry name" value="Uracil-DNA glycosylase-like"/>
    <property type="match status" value="1"/>
</dbReference>
<dbReference type="PROSITE" id="PS00130">
    <property type="entry name" value="U_DNA_GLYCOSYLASE"/>
    <property type="match status" value="1"/>
</dbReference>
<sequence>MTARPLSELVERGWAAALEPVADQVAHMGQFLRAEIAAGRRYLPAGSNVLRAFTFPFDNVRVLIVGQDPYPTPGHAVGLSFSVAPDVRPWPRSLANIFDEYTADLGYPLPSNGDLTPWAQRGVLLLNRVLTVRPSNPASHRGKGWEAVTECAIRALAARAAPLVAILWGRDASTLKPMLAAGNCVAIESPHPSPLSASRGFFGSRPFSRANELLVGMGAEPIDWRLP</sequence>
<keyword id="KW-0963">Cytoplasm</keyword>
<keyword id="KW-0227">DNA damage</keyword>
<keyword id="KW-0234">DNA repair</keyword>
<keyword id="KW-0378">Hydrolase</keyword>
<keyword id="KW-1185">Reference proteome</keyword>
<accession>P9WFQ8</accession>
<accession>L0TBF3</accession>
<accession>P67071</accession>
<accession>P95119</accession>
<comment type="function">
    <text evidence="1">Excises uracil residues from the DNA which can arise as a result of misincorporation of dUMP residues by DNA polymerase or due to deamination of cytosine.</text>
</comment>
<comment type="catalytic activity">
    <reaction>
        <text>Hydrolyzes single-stranded DNA or mismatched double-stranded DNA and polynucleotides, releasing free uracil.</text>
        <dbReference type="EC" id="3.2.2.27"/>
    </reaction>
</comment>
<comment type="subcellular location">
    <subcellularLocation>
        <location evidence="1">Cytoplasm</location>
    </subcellularLocation>
</comment>
<comment type="similarity">
    <text evidence="2">Belongs to the uracil-DNA glycosylase (UDG) superfamily. UNG family.</text>
</comment>
<feature type="chain" id="PRO_0000428494" description="Uracil-DNA glycosylase">
    <location>
        <begin position="1"/>
        <end position="227"/>
    </location>
</feature>
<feature type="active site" description="Proton acceptor" evidence="1">
    <location>
        <position position="68"/>
    </location>
</feature>
<proteinExistence type="inferred from homology"/>
<name>UNG_MYCTO</name>
<evidence type="ECO:0000250" key="1"/>
<evidence type="ECO:0000305" key="2"/>